<feature type="chain" id="PRO_0000311135" description="Polymerase acidic protein">
    <location>
        <begin position="1" status="less than"/>
        <end position="693"/>
    </location>
</feature>
<feature type="short sequence motif" description="Nuclear localization signal 1 (NLS1)" evidence="1">
    <location>
        <begin position="101"/>
        <end position="116"/>
    </location>
</feature>
<feature type="short sequence motif" description="Nuclear localization signal 2 (NLS2)" evidence="1">
    <location>
        <begin position="161"/>
        <end position="224"/>
    </location>
</feature>
<feature type="binding site" evidence="1">
    <location>
        <position position="18"/>
    </location>
    <ligand>
        <name>Mn(2+)</name>
        <dbReference type="ChEBI" id="CHEBI:29035"/>
        <label>1</label>
    </ligand>
</feature>
<feature type="binding site" evidence="1">
    <location>
        <position position="57"/>
    </location>
    <ligand>
        <name>Mn(2+)</name>
        <dbReference type="ChEBI" id="CHEBI:29035"/>
        <label>2</label>
    </ligand>
</feature>
<feature type="binding site" evidence="1">
    <location>
        <position position="85"/>
    </location>
    <ligand>
        <name>Mn(2+)</name>
        <dbReference type="ChEBI" id="CHEBI:29035"/>
        <label>1</label>
    </ligand>
</feature>
<feature type="binding site" evidence="1">
    <location>
        <position position="85"/>
    </location>
    <ligand>
        <name>Mn(2+)</name>
        <dbReference type="ChEBI" id="CHEBI:29035"/>
        <label>2</label>
    </ligand>
</feature>
<feature type="binding site" evidence="1">
    <location>
        <position position="96"/>
    </location>
    <ligand>
        <name>Mn(2+)</name>
        <dbReference type="ChEBI" id="CHEBI:29035"/>
        <label>1</label>
    </ligand>
</feature>
<feature type="binding site" evidence="1">
    <location>
        <position position="97"/>
    </location>
    <ligand>
        <name>Mn(2+)</name>
        <dbReference type="ChEBI" id="CHEBI:29035"/>
        <label>1</label>
    </ligand>
</feature>
<feature type="non-terminal residue">
    <location>
        <position position="1"/>
    </location>
</feature>
<evidence type="ECO:0000255" key="1">
    <source>
        <dbReference type="HAMAP-Rule" id="MF_04063"/>
    </source>
</evidence>
<name>PA_I02A3</name>
<dbReference type="EC" id="3.1.-.-" evidence="1"/>
<dbReference type="EMBL" id="AY651624">
    <property type="protein sequence ID" value="AAT74500.1"/>
    <property type="molecule type" value="Genomic_RNA"/>
</dbReference>
<dbReference type="SMR" id="Q6DNX8"/>
<dbReference type="GO" id="GO:0030430">
    <property type="term" value="C:host cell cytoplasm"/>
    <property type="evidence" value="ECO:0007669"/>
    <property type="project" value="UniProtKB-SubCell"/>
</dbReference>
<dbReference type="GO" id="GO:0042025">
    <property type="term" value="C:host cell nucleus"/>
    <property type="evidence" value="ECO:0007669"/>
    <property type="project" value="UniProtKB-SubCell"/>
</dbReference>
<dbReference type="GO" id="GO:0004519">
    <property type="term" value="F:endonuclease activity"/>
    <property type="evidence" value="ECO:0007669"/>
    <property type="project" value="UniProtKB-KW"/>
</dbReference>
<dbReference type="GO" id="GO:0046872">
    <property type="term" value="F:metal ion binding"/>
    <property type="evidence" value="ECO:0007669"/>
    <property type="project" value="UniProtKB-KW"/>
</dbReference>
<dbReference type="GO" id="GO:0003723">
    <property type="term" value="F:RNA binding"/>
    <property type="evidence" value="ECO:0007669"/>
    <property type="project" value="InterPro"/>
</dbReference>
<dbReference type="GO" id="GO:0075526">
    <property type="term" value="P:cap snatching"/>
    <property type="evidence" value="ECO:0007669"/>
    <property type="project" value="UniProtKB-KW"/>
</dbReference>
<dbReference type="GO" id="GO:0039657">
    <property type="term" value="P:symbiont-mediated suppression of host gene expression"/>
    <property type="evidence" value="ECO:0007669"/>
    <property type="project" value="UniProtKB-KW"/>
</dbReference>
<dbReference type="GO" id="GO:0039523">
    <property type="term" value="P:symbiont-mediated suppression of host mRNA transcription via inhibition of RNA polymerase II activity"/>
    <property type="evidence" value="ECO:0007669"/>
    <property type="project" value="UniProtKB-KW"/>
</dbReference>
<dbReference type="GO" id="GO:0039694">
    <property type="term" value="P:viral RNA genome replication"/>
    <property type="evidence" value="ECO:0007669"/>
    <property type="project" value="InterPro"/>
</dbReference>
<dbReference type="GO" id="GO:0075523">
    <property type="term" value="P:viral translational frameshifting"/>
    <property type="evidence" value="ECO:0007669"/>
    <property type="project" value="UniProtKB-KW"/>
</dbReference>
<dbReference type="Gene3D" id="3.40.91.90">
    <property type="entry name" value="Influenza RNA-dependent RNA polymerase subunit PA, endonuclease domain"/>
    <property type="match status" value="1"/>
</dbReference>
<dbReference type="HAMAP" id="MF_04063">
    <property type="entry name" value="INFV_PA"/>
    <property type="match status" value="1"/>
</dbReference>
<dbReference type="InterPro" id="IPR037534">
    <property type="entry name" value="INFV_PA"/>
</dbReference>
<dbReference type="InterPro" id="IPR001009">
    <property type="entry name" value="PA/PA-X"/>
</dbReference>
<dbReference type="InterPro" id="IPR038372">
    <property type="entry name" value="PA/PA-X_sf"/>
</dbReference>
<dbReference type="Pfam" id="PF00603">
    <property type="entry name" value="Flu_PA"/>
    <property type="match status" value="1"/>
</dbReference>
<organismHost>
    <name type="scientific">Aves</name>
    <dbReference type="NCBI Taxonomy" id="8782"/>
</organismHost>
<organismHost>
    <name type="scientific">Felis catus</name>
    <name type="common">Cat</name>
    <name type="synonym">Felis silvestris catus</name>
    <dbReference type="NCBI Taxonomy" id="9685"/>
</organismHost>
<organismHost>
    <name type="scientific">Homo sapiens</name>
    <name type="common">Human</name>
    <dbReference type="NCBI Taxonomy" id="9606"/>
</organismHost>
<organismHost>
    <name type="scientific">Panthera pardus</name>
    <name type="common">Leopard</name>
    <name type="synonym">Felis pardus</name>
    <dbReference type="NCBI Taxonomy" id="9691"/>
</organismHost>
<organismHost>
    <name type="scientific">Panthera tigris</name>
    <name type="common">Tiger</name>
    <dbReference type="NCBI Taxonomy" id="9694"/>
</organismHost>
<organismHost>
    <name type="scientific">Sus scrofa</name>
    <name type="common">Pig</name>
    <dbReference type="NCBI Taxonomy" id="9823"/>
</organismHost>
<organism>
    <name type="scientific">Influenza A virus (strain A/Chicken/Hong Kong/37.4/2002 H5N1 genotype X2)</name>
    <dbReference type="NCBI Taxonomy" id="284172"/>
    <lineage>
        <taxon>Viruses</taxon>
        <taxon>Riboviria</taxon>
        <taxon>Orthornavirae</taxon>
        <taxon>Negarnaviricota</taxon>
        <taxon>Polyploviricotina</taxon>
        <taxon>Insthoviricetes</taxon>
        <taxon>Articulavirales</taxon>
        <taxon>Orthomyxoviridae</taxon>
        <taxon>Alphainfluenzavirus</taxon>
        <taxon>Alphainfluenzavirus influenzae</taxon>
        <taxon>Influenza A virus</taxon>
    </lineage>
</organism>
<keyword id="KW-1157">Cap snatching</keyword>
<keyword id="KW-0255">Endonuclease</keyword>
<keyword id="KW-1262">Eukaryotic host gene expression shutoff by virus</keyword>
<keyword id="KW-1191">Eukaryotic host transcription shutoff by virus</keyword>
<keyword id="KW-1035">Host cytoplasm</keyword>
<keyword id="KW-1190">Host gene expression shutoff by virus</keyword>
<keyword id="KW-1048">Host nucleus</keyword>
<keyword id="KW-0945">Host-virus interaction</keyword>
<keyword id="KW-0378">Hydrolase</keyword>
<keyword id="KW-1104">Inhibition of host RNA polymerase II by virus</keyword>
<keyword id="KW-0464">Manganese</keyword>
<keyword id="KW-0479">Metal-binding</keyword>
<keyword id="KW-0540">Nuclease</keyword>
<keyword id="KW-0597">Phosphoprotein</keyword>
<keyword id="KW-0688">Ribosomal frameshifting</keyword>
<protein>
    <recommendedName>
        <fullName evidence="1">Polymerase acidic protein</fullName>
        <ecNumber evidence="1">3.1.-.-</ecNumber>
    </recommendedName>
    <alternativeName>
        <fullName evidence="1">RNA-directed RNA polymerase subunit P2</fullName>
    </alternativeName>
</protein>
<reference key="1">
    <citation type="journal article" date="2004" name="Nature">
        <title>Genesis of a highly pathogenic and potentially pandemic H5N1 influenza virus in eastern Asia.</title>
        <authorList>
            <person name="Li K.S."/>
            <person name="Guan Y."/>
            <person name="Wang J."/>
            <person name="Smith G.J.D."/>
            <person name="Xu K.M."/>
            <person name="Duan L."/>
            <person name="Rahardjo A.P."/>
            <person name="Puthavathana P."/>
            <person name="Buranathai C."/>
            <person name="Nguyen T.D."/>
            <person name="Estoepangestie A.T.S."/>
            <person name="Chaisingh A."/>
            <person name="Auewarakul P."/>
            <person name="Long H.T."/>
            <person name="Hanh N.T.H."/>
            <person name="Webby R.J."/>
            <person name="Poon L.L.M."/>
            <person name="Chen H."/>
            <person name="Shortridge K.F."/>
            <person name="Yuen K.Y."/>
            <person name="Webster R.G."/>
            <person name="Peiris J.S.M."/>
        </authorList>
    </citation>
    <scope>NUCLEOTIDE SEQUENCE [GENOMIC RNA]</scope>
</reference>
<comment type="function">
    <text evidence="1">Plays an essential role in viral RNA transcription and replication by forming the heterotrimeric polymerase complex together with PB1 and PB2 subunits. The complex transcribes viral mRNAs by using a unique mechanism called cap-snatching. It consists in the hijacking and cleavage of host capped pre-mRNAs. These short capped RNAs are then used as primers for viral mRNAs. The PB2 subunit is responsible for the binding of the 5' cap of cellular pre-mRNAs which are subsequently cleaved after 10-13 nucleotides by the PA subunit that carries the endonuclease activity.</text>
</comment>
<comment type="cofactor">
    <cofactor evidence="1">
        <name>Mn(2+)</name>
        <dbReference type="ChEBI" id="CHEBI:29035"/>
    </cofactor>
    <text evidence="1">Binds 2 manganese ions per subunit.</text>
</comment>
<comment type="subunit">
    <text evidence="1">Influenza RNA polymerase is composed of three subunits: PB1, PB2 and PA. Interacts (via C-terminus) with PB1 (via N-terminus).</text>
</comment>
<comment type="subcellular location">
    <subcellularLocation>
        <location evidence="1">Host cytoplasm</location>
    </subcellularLocation>
    <subcellularLocation>
        <location evidence="1">Host nucleus</location>
    </subcellularLocation>
    <text evidence="1">PB1 and PA are transported in the host nucleus as a complex.</text>
</comment>
<comment type="alternative products">
    <event type="ribosomal frameshifting"/>
    <isoform>
        <id>Q6DNX8-1</id>
        <name>PA</name>
        <sequence type="displayed"/>
    </isoform>
    <isoform>
        <id>Q6DNX8-2</id>
        <name>PA-X</name>
        <sequence type="not described"/>
    </isoform>
</comment>
<comment type="PTM">
    <text evidence="1">Phosphorylated on serines and threonines by host kinases, including human casein kinase II.</text>
</comment>
<comment type="similarity">
    <text evidence="1">Belongs to the influenza viruses PA family.</text>
</comment>
<accession>Q6DNX8</accession>
<gene>
    <name evidence="1" type="primary">PA</name>
</gene>
<sequence length="693" mass="79766">YGEDPKVETNKFAAICTHLEVCFMYSDFHFIDERNESIIVESGDPNALLKHRFEIIEGRDRTMAWTVVNSICNTTGVEKPKFLPDLYDYKENRFIEIGVTRREVHIYYLEKANKIKSEKTHIHIFSFTGEEMATKADYILDEESRARIKTRLFTIRQEMASRGLWDSFRQSERGEETIEERFEINGTMRRLADQSLPPNFSSLENFRAYVDGFEPNGCIEGKLSQMSKEVNARIEPFLKTTPRPLRLPDGPPCSQRSKFLLMDALKLSIEDPSHEGEGIPLYDAIKCMKTFFGWKEPNIVKPHEKGINPNYLLAWKQVLAEIQDIENEEKIPKTKNMKKTGQLKWALGENMAPEKVDFEDCKDVSDLRQYNSDEPESRSLASWIQSEFNKACELTDSSWIELDEIGEDVAPIEHIASMRRNYFTAEVSHCRATEYIMKGVYINTALLNASCAAMDDFQLIPMISKCRTKEGRRKTNLYGFIIKGRSHLRNDTDVVNFVSMEFSLTDPRLEPHKWEKYCVLEIGDMLLRTAIGQVSRPMFLYVRTNGTSKIKMKWGMEMRRCLLQSLQQIESMIEAESSVKEKDMTKEFFESKSETWPIGESPKGVEEGSIGKVCRTLLAKSVFNSLYASPQLEGFSAESRRLLLIVQALGDNLEPGTFDLGGLYEAIEECLINDPWVLLNASWFNSFLTHALR</sequence>
<proteinExistence type="inferred from homology"/>